<reference key="1">
    <citation type="submission" date="2006-10" db="EMBL/GenBank/DDBJ databases">
        <title>Complete sequence of Syntrophobacter fumaroxidans MPOB.</title>
        <authorList>
            <consortium name="US DOE Joint Genome Institute"/>
            <person name="Copeland A."/>
            <person name="Lucas S."/>
            <person name="Lapidus A."/>
            <person name="Barry K."/>
            <person name="Detter J.C."/>
            <person name="Glavina del Rio T."/>
            <person name="Hammon N."/>
            <person name="Israni S."/>
            <person name="Pitluck S."/>
            <person name="Goltsman E.G."/>
            <person name="Martinez M."/>
            <person name="Schmutz J."/>
            <person name="Larimer F."/>
            <person name="Land M."/>
            <person name="Hauser L."/>
            <person name="Kyrpides N."/>
            <person name="Kim E."/>
            <person name="Boone D.R."/>
            <person name="Brockman F."/>
            <person name="Culley D."/>
            <person name="Ferry J."/>
            <person name="Gunsalus R."/>
            <person name="McInerney M.J."/>
            <person name="Morrison M."/>
            <person name="Plugge C."/>
            <person name="Rohlin L."/>
            <person name="Scholten J."/>
            <person name="Sieber J."/>
            <person name="Stams A.J.M."/>
            <person name="Worm P."/>
            <person name="Henstra A.M."/>
            <person name="Richardson P."/>
        </authorList>
    </citation>
    <scope>NUCLEOTIDE SEQUENCE [LARGE SCALE GENOMIC DNA]</scope>
    <source>
        <strain>DSM 10017 / MPOB</strain>
    </source>
</reference>
<proteinExistence type="inferred from homology"/>
<keyword id="KW-0963">Cytoplasm</keyword>
<keyword id="KW-1185">Reference proteome</keyword>
<keyword id="KW-0704">Schiff base</keyword>
<keyword id="KW-0784">Thiamine biosynthesis</keyword>
<keyword id="KW-0808">Transferase</keyword>
<protein>
    <recommendedName>
        <fullName evidence="1">Thiazole synthase</fullName>
        <ecNumber evidence="1">2.8.1.10</ecNumber>
    </recommendedName>
</protein>
<feature type="chain" id="PRO_1000026051" description="Thiazole synthase">
    <location>
        <begin position="1"/>
        <end position="256"/>
    </location>
</feature>
<feature type="active site" description="Schiff-base intermediate with DXP" evidence="1">
    <location>
        <position position="98"/>
    </location>
</feature>
<feature type="binding site" evidence="1">
    <location>
        <position position="159"/>
    </location>
    <ligand>
        <name>1-deoxy-D-xylulose 5-phosphate</name>
        <dbReference type="ChEBI" id="CHEBI:57792"/>
    </ligand>
</feature>
<feature type="binding site" evidence="1">
    <location>
        <begin position="185"/>
        <end position="186"/>
    </location>
    <ligand>
        <name>1-deoxy-D-xylulose 5-phosphate</name>
        <dbReference type="ChEBI" id="CHEBI:57792"/>
    </ligand>
</feature>
<feature type="binding site" evidence="1">
    <location>
        <begin position="207"/>
        <end position="208"/>
    </location>
    <ligand>
        <name>1-deoxy-D-xylulose 5-phosphate</name>
        <dbReference type="ChEBI" id="CHEBI:57792"/>
    </ligand>
</feature>
<accession>A0LJA4</accession>
<comment type="function">
    <text evidence="1">Catalyzes the rearrangement of 1-deoxy-D-xylulose 5-phosphate (DXP) to produce the thiazole phosphate moiety of thiamine. Sulfur is provided by the thiocarboxylate moiety of the carrier protein ThiS. In vitro, sulfur can be provided by H(2)S.</text>
</comment>
<comment type="catalytic activity">
    <reaction evidence="1">
        <text>[ThiS sulfur-carrier protein]-C-terminal-Gly-aminoethanethioate + 2-iminoacetate + 1-deoxy-D-xylulose 5-phosphate = [ThiS sulfur-carrier protein]-C-terminal Gly-Gly + 2-[(2R,5Z)-2-carboxy-4-methylthiazol-5(2H)-ylidene]ethyl phosphate + 2 H2O + H(+)</text>
        <dbReference type="Rhea" id="RHEA:26297"/>
        <dbReference type="Rhea" id="RHEA-COMP:12909"/>
        <dbReference type="Rhea" id="RHEA-COMP:19908"/>
        <dbReference type="ChEBI" id="CHEBI:15377"/>
        <dbReference type="ChEBI" id="CHEBI:15378"/>
        <dbReference type="ChEBI" id="CHEBI:57792"/>
        <dbReference type="ChEBI" id="CHEBI:62899"/>
        <dbReference type="ChEBI" id="CHEBI:77846"/>
        <dbReference type="ChEBI" id="CHEBI:90778"/>
        <dbReference type="ChEBI" id="CHEBI:232372"/>
        <dbReference type="EC" id="2.8.1.10"/>
    </reaction>
</comment>
<comment type="pathway">
    <text evidence="1">Cofactor biosynthesis; thiamine diphosphate biosynthesis.</text>
</comment>
<comment type="subunit">
    <text evidence="1">Homotetramer. Forms heterodimers with either ThiH or ThiS.</text>
</comment>
<comment type="subcellular location">
    <subcellularLocation>
        <location evidence="1">Cytoplasm</location>
    </subcellularLocation>
</comment>
<comment type="similarity">
    <text evidence="1">Belongs to the ThiG family.</text>
</comment>
<dbReference type="EC" id="2.8.1.10" evidence="1"/>
<dbReference type="EMBL" id="CP000478">
    <property type="protein sequence ID" value="ABK17506.1"/>
    <property type="molecule type" value="Genomic_DNA"/>
</dbReference>
<dbReference type="RefSeq" id="WP_011698676.1">
    <property type="nucleotide sequence ID" value="NC_008554.1"/>
</dbReference>
<dbReference type="SMR" id="A0LJA4"/>
<dbReference type="FunCoup" id="A0LJA4">
    <property type="interactions" value="340"/>
</dbReference>
<dbReference type="STRING" id="335543.Sfum_1821"/>
<dbReference type="KEGG" id="sfu:Sfum_1821"/>
<dbReference type="eggNOG" id="COG2022">
    <property type="taxonomic scope" value="Bacteria"/>
</dbReference>
<dbReference type="HOGENOM" id="CLU_062233_1_0_7"/>
<dbReference type="InParanoid" id="A0LJA4"/>
<dbReference type="OrthoDB" id="9805935at2"/>
<dbReference type="UniPathway" id="UPA00060"/>
<dbReference type="Proteomes" id="UP000001784">
    <property type="component" value="Chromosome"/>
</dbReference>
<dbReference type="GO" id="GO:0005737">
    <property type="term" value="C:cytoplasm"/>
    <property type="evidence" value="ECO:0007669"/>
    <property type="project" value="UniProtKB-SubCell"/>
</dbReference>
<dbReference type="GO" id="GO:1990107">
    <property type="term" value="F:thiazole synthase activity"/>
    <property type="evidence" value="ECO:0007669"/>
    <property type="project" value="UniProtKB-EC"/>
</dbReference>
<dbReference type="GO" id="GO:0009229">
    <property type="term" value="P:thiamine diphosphate biosynthetic process"/>
    <property type="evidence" value="ECO:0007669"/>
    <property type="project" value="UniProtKB-UniRule"/>
</dbReference>
<dbReference type="CDD" id="cd04728">
    <property type="entry name" value="ThiG"/>
    <property type="match status" value="1"/>
</dbReference>
<dbReference type="FunFam" id="3.20.20.70:FF:000049">
    <property type="entry name" value="Thiazole synthase"/>
    <property type="match status" value="1"/>
</dbReference>
<dbReference type="Gene3D" id="3.20.20.70">
    <property type="entry name" value="Aldolase class I"/>
    <property type="match status" value="1"/>
</dbReference>
<dbReference type="HAMAP" id="MF_00443">
    <property type="entry name" value="ThiG"/>
    <property type="match status" value="1"/>
</dbReference>
<dbReference type="InterPro" id="IPR013785">
    <property type="entry name" value="Aldolase_TIM"/>
</dbReference>
<dbReference type="InterPro" id="IPR033983">
    <property type="entry name" value="Thiazole_synthase_ThiG"/>
</dbReference>
<dbReference type="InterPro" id="IPR008867">
    <property type="entry name" value="ThiG"/>
</dbReference>
<dbReference type="PANTHER" id="PTHR34266">
    <property type="entry name" value="THIAZOLE SYNTHASE"/>
    <property type="match status" value="1"/>
</dbReference>
<dbReference type="PANTHER" id="PTHR34266:SF2">
    <property type="entry name" value="THIAZOLE SYNTHASE"/>
    <property type="match status" value="1"/>
</dbReference>
<dbReference type="Pfam" id="PF05690">
    <property type="entry name" value="ThiG"/>
    <property type="match status" value="1"/>
</dbReference>
<dbReference type="SUPFAM" id="SSF110399">
    <property type="entry name" value="ThiG-like"/>
    <property type="match status" value="1"/>
</dbReference>
<organism>
    <name type="scientific">Syntrophobacter fumaroxidans (strain DSM 10017 / MPOB)</name>
    <dbReference type="NCBI Taxonomy" id="335543"/>
    <lineage>
        <taxon>Bacteria</taxon>
        <taxon>Pseudomonadati</taxon>
        <taxon>Thermodesulfobacteriota</taxon>
        <taxon>Syntrophobacteria</taxon>
        <taxon>Syntrophobacterales</taxon>
        <taxon>Syntrophobacteraceae</taxon>
        <taxon>Syntrophobacter</taxon>
    </lineage>
</organism>
<gene>
    <name evidence="1" type="primary">thiG</name>
    <name type="ordered locus">Sfum_1821</name>
</gene>
<name>THIG_SYNFM</name>
<sequence>MDKPLVIAGRSFQSRLLLGTGKFSSSEAMKRAIEASGSEVVTVALRRVELENPQDSILSAIDTSRYLLLPNTSGARDALEAVRLARLARAAGCEPWVKLEVTPDPHYLLPDPVETLKAAEILIKEGFIVLPYINADPILAKRLEDLGAATVMPLGSPIGSNRGIRTRDSIAIIIEKANVPVVVDAGLGAPSHAAEAMEMGADAVLVNTAIAVAGDPEAMAKAFRKGVEAGREAYLAGLGSTRATAEASSPLTGFLR</sequence>
<evidence type="ECO:0000255" key="1">
    <source>
        <dbReference type="HAMAP-Rule" id="MF_00443"/>
    </source>
</evidence>